<accession>P0A6A1</accession>
<accession>P27853</accession>
<accession>P27854</accession>
<accession>P27855</accession>
<accession>P76764</accession>
<reference key="1">
    <citation type="journal article" date="2001" name="Nature">
        <title>Genome sequence of enterohaemorrhagic Escherichia coli O157:H7.</title>
        <authorList>
            <person name="Perna N.T."/>
            <person name="Plunkett G. III"/>
            <person name="Burland V."/>
            <person name="Mau B."/>
            <person name="Glasner J.D."/>
            <person name="Rose D.J."/>
            <person name="Mayhew G.F."/>
            <person name="Evans P.S."/>
            <person name="Gregor J."/>
            <person name="Kirkpatrick H.A."/>
            <person name="Posfai G."/>
            <person name="Hackett J."/>
            <person name="Klink S."/>
            <person name="Boutin A."/>
            <person name="Shao Y."/>
            <person name="Miller L."/>
            <person name="Grotbeck E.J."/>
            <person name="Davis N.W."/>
            <person name="Lim A."/>
            <person name="Dimalanta E.T."/>
            <person name="Potamousis K."/>
            <person name="Apodaca J."/>
            <person name="Anantharaman T.S."/>
            <person name="Lin J."/>
            <person name="Yen G."/>
            <person name="Schwartz D.C."/>
            <person name="Welch R.A."/>
            <person name="Blattner F.R."/>
        </authorList>
    </citation>
    <scope>NUCLEOTIDE SEQUENCE [LARGE SCALE GENOMIC DNA]</scope>
    <source>
        <strain>O157:H7 / EDL933 / ATCC 700927 / EHEC</strain>
    </source>
</reference>
<reference key="2">
    <citation type="journal article" date="2001" name="DNA Res.">
        <title>Complete genome sequence of enterohemorrhagic Escherichia coli O157:H7 and genomic comparison with a laboratory strain K-12.</title>
        <authorList>
            <person name="Hayashi T."/>
            <person name="Makino K."/>
            <person name="Ohnishi M."/>
            <person name="Kurokawa K."/>
            <person name="Ishii K."/>
            <person name="Yokoyama K."/>
            <person name="Han C.-G."/>
            <person name="Ohtsubo E."/>
            <person name="Nakayama K."/>
            <person name="Murata T."/>
            <person name="Tanaka M."/>
            <person name="Tobe T."/>
            <person name="Iida T."/>
            <person name="Takami H."/>
            <person name="Honda T."/>
            <person name="Sasakawa C."/>
            <person name="Ogasawara N."/>
            <person name="Yasunaga T."/>
            <person name="Kuhara S."/>
            <person name="Shiba T."/>
            <person name="Hattori M."/>
            <person name="Shinagawa H."/>
        </authorList>
    </citation>
    <scope>NUCLEOTIDE SEQUENCE [LARGE SCALE GENOMIC DNA]</scope>
    <source>
        <strain>O157:H7 / Sakai / RIMD 0509952 / EHEC</strain>
    </source>
</reference>
<evidence type="ECO:0000255" key="1">
    <source>
        <dbReference type="HAMAP-Rule" id="MF_00414"/>
    </source>
</evidence>
<organism>
    <name type="scientific">Escherichia coli O157:H7</name>
    <dbReference type="NCBI Taxonomy" id="83334"/>
    <lineage>
        <taxon>Bacteria</taxon>
        <taxon>Pseudomonadati</taxon>
        <taxon>Pseudomonadota</taxon>
        <taxon>Gammaproteobacteria</taxon>
        <taxon>Enterobacterales</taxon>
        <taxon>Enterobacteriaceae</taxon>
        <taxon>Escherichia</taxon>
    </lineage>
</organism>
<gene>
    <name evidence="1" type="primary">ubiB</name>
    <name type="synonym">aarF</name>
    <name type="ordered locus">Z5357</name>
    <name type="ordered locus">ECs4765</name>
</gene>
<proteinExistence type="inferred from homology"/>
<comment type="function">
    <text evidence="1">Is probably a protein kinase regulator of UbiI activity which is involved in aerobic coenzyme Q (ubiquinone) biosynthesis.</text>
</comment>
<comment type="pathway">
    <text>Cofactor biosynthesis; ubiquinone biosynthesis [regulation].</text>
</comment>
<comment type="subcellular location">
    <subcellularLocation>
        <location evidence="1">Cell inner membrane</location>
        <topology evidence="1">Multi-pass membrane protein</topology>
    </subcellularLocation>
</comment>
<comment type="similarity">
    <text evidence="1">Belongs to the ABC1 family. UbiB subfamily.</text>
</comment>
<sequence>MTPGEVRRLYFIIRTFLSYGLDELIPKMRITLPLRLWRYSLFWMPNRHKDKLLGERLRLALQELGPVWIKFGQMLSTRRDLFPPHIADQLALLQDKVAPFDGKLAKQQIEAAMGGLPVEAWFDDFEIKPLASASIAQVHTARLKSNGKEVVIKVIRPDILPVIKADLKLIYRLARWVPRLLPDGRRLRPTEVVREYEKTLIDELNLLRESANAIQLRRNFEDSPMLYIPEVYPDYCSEGMMVMERIYGIPVSDVAALEKNGTNMKLLAERGVQVFFTQVFRDSFFHADMHPGNIFVSYEHPENPKYIGIDCGIVGSLNKEDKRYLAENFIAFFNRDYRKVAELHVDSGWVPPDTNVEEFEFAIRTVCEPIFEKPLAEISFGHVLLNLFNTARRFNMEVQPQLVLLQKTLLYVEGVGRQLYPQLDLWKTAKPFLESWIKDQVGIPALVRAFKEKAPFWVEKMPELPELVYDSLRQGKYLQHSVDKIARELQSNHVRQGQSRYFLGIGATLVLSGTFLLVSRPEWGLMPGWLMAGGLIAWFVGWRKTR</sequence>
<name>UBIB_ECO57</name>
<dbReference type="EC" id="2.7.-.-" evidence="1"/>
<dbReference type="EMBL" id="AE005174">
    <property type="protein sequence ID" value="AAG59031.1"/>
    <property type="molecule type" value="Genomic_DNA"/>
</dbReference>
<dbReference type="EMBL" id="BA000007">
    <property type="protein sequence ID" value="BAB38188.1"/>
    <property type="molecule type" value="Genomic_DNA"/>
</dbReference>
<dbReference type="PIR" id="C86071">
    <property type="entry name" value="C86071"/>
</dbReference>
<dbReference type="PIR" id="E91224">
    <property type="entry name" value="E91224"/>
</dbReference>
<dbReference type="RefSeq" id="NP_312792.1">
    <property type="nucleotide sequence ID" value="NC_002695.1"/>
</dbReference>
<dbReference type="RefSeq" id="WP_000187530.1">
    <property type="nucleotide sequence ID" value="NZ_VOAI01000017.1"/>
</dbReference>
<dbReference type="SMR" id="P0A6A1"/>
<dbReference type="STRING" id="155864.Z5357"/>
<dbReference type="GeneID" id="75204829"/>
<dbReference type="GeneID" id="915139"/>
<dbReference type="KEGG" id="ece:Z5357"/>
<dbReference type="KEGG" id="ecs:ECs_4765"/>
<dbReference type="PATRIC" id="fig|386585.9.peg.4974"/>
<dbReference type="eggNOG" id="COG0661">
    <property type="taxonomic scope" value="Bacteria"/>
</dbReference>
<dbReference type="HOGENOM" id="CLU_006533_0_0_6"/>
<dbReference type="OMA" id="FQTARRF"/>
<dbReference type="UniPathway" id="UPA00232"/>
<dbReference type="Proteomes" id="UP000000558">
    <property type="component" value="Chromosome"/>
</dbReference>
<dbReference type="Proteomes" id="UP000002519">
    <property type="component" value="Chromosome"/>
</dbReference>
<dbReference type="GO" id="GO:0005886">
    <property type="term" value="C:plasma membrane"/>
    <property type="evidence" value="ECO:0007669"/>
    <property type="project" value="UniProtKB-SubCell"/>
</dbReference>
<dbReference type="GO" id="GO:0005524">
    <property type="term" value="F:ATP binding"/>
    <property type="evidence" value="ECO:0007669"/>
    <property type="project" value="UniProtKB-KW"/>
</dbReference>
<dbReference type="GO" id="GO:0004672">
    <property type="term" value="F:protein kinase activity"/>
    <property type="evidence" value="ECO:0007669"/>
    <property type="project" value="UniProtKB-UniRule"/>
</dbReference>
<dbReference type="GO" id="GO:0010795">
    <property type="term" value="P:regulation of ubiquinone biosynthetic process"/>
    <property type="evidence" value="ECO:0007669"/>
    <property type="project" value="UniProtKB-UniRule"/>
</dbReference>
<dbReference type="GO" id="GO:0006744">
    <property type="term" value="P:ubiquinone biosynthetic process"/>
    <property type="evidence" value="ECO:0007669"/>
    <property type="project" value="UniProtKB-UniPathway"/>
</dbReference>
<dbReference type="CDD" id="cd13972">
    <property type="entry name" value="UbiB"/>
    <property type="match status" value="1"/>
</dbReference>
<dbReference type="HAMAP" id="MF_00414">
    <property type="entry name" value="UbiB"/>
    <property type="match status" value="1"/>
</dbReference>
<dbReference type="InterPro" id="IPR004147">
    <property type="entry name" value="ABC1_dom"/>
</dbReference>
<dbReference type="InterPro" id="IPR011009">
    <property type="entry name" value="Kinase-like_dom_sf"/>
</dbReference>
<dbReference type="InterPro" id="IPR010232">
    <property type="entry name" value="UbiB"/>
</dbReference>
<dbReference type="InterPro" id="IPR045308">
    <property type="entry name" value="UbiB_bact"/>
</dbReference>
<dbReference type="InterPro" id="IPR050154">
    <property type="entry name" value="UbiB_kinase"/>
</dbReference>
<dbReference type="NCBIfam" id="NF003404">
    <property type="entry name" value="PRK04750.1"/>
    <property type="match status" value="1"/>
</dbReference>
<dbReference type="NCBIfam" id="TIGR01982">
    <property type="entry name" value="UbiB"/>
    <property type="match status" value="1"/>
</dbReference>
<dbReference type="PANTHER" id="PTHR10566">
    <property type="entry name" value="CHAPERONE-ACTIVITY OF BC1 COMPLEX CABC1 -RELATED"/>
    <property type="match status" value="1"/>
</dbReference>
<dbReference type="PANTHER" id="PTHR10566:SF113">
    <property type="entry name" value="PROTEIN ACTIVITY OF BC1 COMPLEX KINASE 7, CHLOROPLASTIC"/>
    <property type="match status" value="1"/>
</dbReference>
<dbReference type="Pfam" id="PF03109">
    <property type="entry name" value="ABC1"/>
    <property type="match status" value="1"/>
</dbReference>
<dbReference type="SUPFAM" id="SSF56112">
    <property type="entry name" value="Protein kinase-like (PK-like)"/>
    <property type="match status" value="1"/>
</dbReference>
<feature type="chain" id="PRO_0000200704" description="Probable protein kinase UbiB">
    <location>
        <begin position="1"/>
        <end position="546"/>
    </location>
</feature>
<feature type="transmembrane region" description="Helical" evidence="1">
    <location>
        <begin position="501"/>
        <end position="521"/>
    </location>
</feature>
<feature type="transmembrane region" description="Helical" evidence="1">
    <location>
        <begin position="522"/>
        <end position="542"/>
    </location>
</feature>
<feature type="domain" description="Protein kinase" evidence="1">
    <location>
        <begin position="124"/>
        <end position="502"/>
    </location>
</feature>
<feature type="active site" description="Proton acceptor" evidence="1">
    <location>
        <position position="288"/>
    </location>
</feature>
<feature type="binding site" evidence="1">
    <location>
        <begin position="130"/>
        <end position="138"/>
    </location>
    <ligand>
        <name>ATP</name>
        <dbReference type="ChEBI" id="CHEBI:30616"/>
    </ligand>
</feature>
<feature type="binding site" evidence="1">
    <location>
        <position position="153"/>
    </location>
    <ligand>
        <name>ATP</name>
        <dbReference type="ChEBI" id="CHEBI:30616"/>
    </ligand>
</feature>
<keyword id="KW-0067">ATP-binding</keyword>
<keyword id="KW-0997">Cell inner membrane</keyword>
<keyword id="KW-1003">Cell membrane</keyword>
<keyword id="KW-0418">Kinase</keyword>
<keyword id="KW-0472">Membrane</keyword>
<keyword id="KW-0547">Nucleotide-binding</keyword>
<keyword id="KW-1185">Reference proteome</keyword>
<keyword id="KW-0808">Transferase</keyword>
<keyword id="KW-0812">Transmembrane</keyword>
<keyword id="KW-1133">Transmembrane helix</keyword>
<keyword id="KW-0831">Ubiquinone biosynthesis</keyword>
<protein>
    <recommendedName>
        <fullName evidence="1">Probable protein kinase UbiB</fullName>
        <ecNumber evidence="1">2.7.-.-</ecNumber>
    </recommendedName>
    <alternativeName>
        <fullName evidence="1">Ubiquinone biosynthesis protein UbiB</fullName>
    </alternativeName>
</protein>